<sequence>MGVKQTPPVQVKVSDADSTNRRKSSSQEGNPQLVQLKAKSDKDKRKGSSDSTASIMGSSNALPTKNLTTPPALNPLTTSISRGNTAYERSVNGSRITMHSNLAPTETQDVSWSEIDTLDDVKKMAKEPIVNDGFPRDFESNLTQMRKSHAQLLRLMRERNQRLKYAKLRSPPHKDQHNSATNKDQEPDEVLHDPEIALDGEKYVSQVVDTIKDVHRC</sequence>
<keyword id="KW-1185">Reference proteome</keyword>
<protein>
    <recommendedName>
        <fullName>Uncharacterized protein YBR197C</fullName>
    </recommendedName>
</protein>
<organism>
    <name type="scientific">Saccharomyces cerevisiae (strain ATCC 204508 / S288c)</name>
    <name type="common">Baker's yeast</name>
    <dbReference type="NCBI Taxonomy" id="559292"/>
    <lineage>
        <taxon>Eukaryota</taxon>
        <taxon>Fungi</taxon>
        <taxon>Dikarya</taxon>
        <taxon>Ascomycota</taxon>
        <taxon>Saccharomycotina</taxon>
        <taxon>Saccharomycetes</taxon>
        <taxon>Saccharomycetales</taxon>
        <taxon>Saccharomycetaceae</taxon>
        <taxon>Saccharomyces</taxon>
    </lineage>
</organism>
<comment type="miscellaneous">
    <text evidence="2">Present with 1360 molecules/cell in log phase SD medium.</text>
</comment>
<name>YB47_YEAST</name>
<gene>
    <name type="ordered locus">YBR197C</name>
    <name type="ORF">YBR1409</name>
</gene>
<evidence type="ECO:0000256" key="1">
    <source>
        <dbReference type="SAM" id="MobiDB-lite"/>
    </source>
</evidence>
<evidence type="ECO:0000269" key="2">
    <source>
    </source>
</evidence>
<dbReference type="EMBL" id="Z21487">
    <property type="protein sequence ID" value="CAA79684.1"/>
    <property type="molecule type" value="Genomic_DNA"/>
</dbReference>
<dbReference type="EMBL" id="Z36066">
    <property type="protein sequence ID" value="CAA85159.1"/>
    <property type="molecule type" value="Genomic_DNA"/>
</dbReference>
<dbReference type="EMBL" id="AY558128">
    <property type="protein sequence ID" value="AAS56454.1"/>
    <property type="molecule type" value="Genomic_DNA"/>
</dbReference>
<dbReference type="EMBL" id="BK006936">
    <property type="protein sequence ID" value="DAA07313.1"/>
    <property type="molecule type" value="Genomic_DNA"/>
</dbReference>
<dbReference type="PIR" id="S45446">
    <property type="entry name" value="S45446"/>
</dbReference>
<dbReference type="RefSeq" id="NP_009756.1">
    <property type="nucleotide sequence ID" value="NM_001178545.1"/>
</dbReference>
<dbReference type="SMR" id="P38306"/>
<dbReference type="BioGRID" id="32894">
    <property type="interactions" value="31"/>
</dbReference>
<dbReference type="DIP" id="DIP-4258N"/>
<dbReference type="FunCoup" id="P38306">
    <property type="interactions" value="41"/>
</dbReference>
<dbReference type="IntAct" id="P38306">
    <property type="interactions" value="4"/>
</dbReference>
<dbReference type="MINT" id="P38306"/>
<dbReference type="STRING" id="4932.YBR197C"/>
<dbReference type="iPTMnet" id="P38306"/>
<dbReference type="PaxDb" id="4932-YBR197C"/>
<dbReference type="PeptideAtlas" id="P38306"/>
<dbReference type="EnsemblFungi" id="YBR197C_mRNA">
    <property type="protein sequence ID" value="YBR197C"/>
    <property type="gene ID" value="YBR197C"/>
</dbReference>
<dbReference type="GeneID" id="852496"/>
<dbReference type="KEGG" id="sce:YBR197C"/>
<dbReference type="AGR" id="SGD:S000000401"/>
<dbReference type="SGD" id="S000000401">
    <property type="gene designation" value="YBR197C"/>
</dbReference>
<dbReference type="VEuPathDB" id="FungiDB:YBR197C"/>
<dbReference type="eggNOG" id="ENOG502SDYB">
    <property type="taxonomic scope" value="Eukaryota"/>
</dbReference>
<dbReference type="HOGENOM" id="CLU_1361101_0_0_1"/>
<dbReference type="InParanoid" id="P38306"/>
<dbReference type="OMA" id="MRKSHAQ"/>
<dbReference type="OrthoDB" id="4065597at2759"/>
<dbReference type="BioCyc" id="YEAST:G3O-29138-MONOMER"/>
<dbReference type="BioGRID-ORCS" id="852496">
    <property type="hits" value="0 hits in 10 CRISPR screens"/>
</dbReference>
<dbReference type="PRO" id="PR:P38306"/>
<dbReference type="Proteomes" id="UP000002311">
    <property type="component" value="Chromosome II"/>
</dbReference>
<dbReference type="RNAct" id="P38306">
    <property type="molecule type" value="protein"/>
</dbReference>
<dbReference type="GO" id="GO:0005737">
    <property type="term" value="C:cytoplasm"/>
    <property type="evidence" value="ECO:0007005"/>
    <property type="project" value="SGD"/>
</dbReference>
<dbReference type="GO" id="GO:0005634">
    <property type="term" value="C:nucleus"/>
    <property type="evidence" value="ECO:0007005"/>
    <property type="project" value="SGD"/>
</dbReference>
<dbReference type="Pfam" id="PF17242">
    <property type="entry name" value="DUF5315"/>
    <property type="match status" value="1"/>
</dbReference>
<feature type="chain" id="PRO_0000202508" description="Uncharacterized protein YBR197C">
    <location>
        <begin position="1"/>
        <end position="217"/>
    </location>
</feature>
<feature type="region of interest" description="Disordered" evidence="1">
    <location>
        <begin position="1"/>
        <end position="85"/>
    </location>
</feature>
<feature type="region of interest" description="Disordered" evidence="1">
    <location>
        <begin position="167"/>
        <end position="189"/>
    </location>
</feature>
<feature type="compositionally biased region" description="Basic and acidic residues" evidence="1">
    <location>
        <begin position="38"/>
        <end position="48"/>
    </location>
</feature>
<feature type="compositionally biased region" description="Low complexity" evidence="1">
    <location>
        <begin position="60"/>
        <end position="78"/>
    </location>
</feature>
<feature type="compositionally biased region" description="Basic and acidic residues" evidence="1">
    <location>
        <begin position="172"/>
        <end position="189"/>
    </location>
</feature>
<reference key="1">
    <citation type="journal article" date="1994" name="Yeast">
        <title>Nucleotide sequence analysis of an 11.7 kb fragment of yeast chromosome II including BEM1, a new gene of the WD-40 repeat family and a new member of the KRE2/MNT1 family.</title>
        <authorList>
            <person name="Mallet L."/>
            <person name="Bussereau F."/>
            <person name="Jacquet M."/>
        </authorList>
    </citation>
    <scope>NUCLEOTIDE SEQUENCE [GENOMIC DNA]</scope>
    <source>
        <strain>ATCC 204508 / S288c</strain>
    </source>
</reference>
<reference key="2">
    <citation type="journal article" date="1994" name="EMBO J.">
        <title>Complete DNA sequence of yeast chromosome II.</title>
        <authorList>
            <person name="Feldmann H."/>
            <person name="Aigle M."/>
            <person name="Aljinovic G."/>
            <person name="Andre B."/>
            <person name="Baclet M.C."/>
            <person name="Barthe C."/>
            <person name="Baur A."/>
            <person name="Becam A.-M."/>
            <person name="Biteau N."/>
            <person name="Boles E."/>
            <person name="Brandt T."/>
            <person name="Brendel M."/>
            <person name="Brueckner M."/>
            <person name="Bussereau F."/>
            <person name="Christiansen C."/>
            <person name="Contreras R."/>
            <person name="Crouzet M."/>
            <person name="Cziepluch C."/>
            <person name="Demolis N."/>
            <person name="Delaveau T."/>
            <person name="Doignon F."/>
            <person name="Domdey H."/>
            <person name="Duesterhus S."/>
            <person name="Dubois E."/>
            <person name="Dujon B."/>
            <person name="El Bakkoury M."/>
            <person name="Entian K.-D."/>
            <person name="Feuermann M."/>
            <person name="Fiers W."/>
            <person name="Fobo G.M."/>
            <person name="Fritz C."/>
            <person name="Gassenhuber J."/>
            <person name="Glansdorff N."/>
            <person name="Goffeau A."/>
            <person name="Grivell L.A."/>
            <person name="de Haan M."/>
            <person name="Hein C."/>
            <person name="Herbert C.J."/>
            <person name="Hollenberg C.P."/>
            <person name="Holmstroem K."/>
            <person name="Jacq C."/>
            <person name="Jacquet M."/>
            <person name="Jauniaux J.-C."/>
            <person name="Jonniaux J.-L."/>
            <person name="Kallesoee T."/>
            <person name="Kiesau P."/>
            <person name="Kirchrath L."/>
            <person name="Koetter P."/>
            <person name="Korol S."/>
            <person name="Liebl S."/>
            <person name="Logghe M."/>
            <person name="Lohan A.J.E."/>
            <person name="Louis E.J."/>
            <person name="Li Z.Y."/>
            <person name="Maat M.J."/>
            <person name="Mallet L."/>
            <person name="Mannhaupt G."/>
            <person name="Messenguy F."/>
            <person name="Miosga T."/>
            <person name="Molemans F."/>
            <person name="Mueller S."/>
            <person name="Nasr F."/>
            <person name="Obermaier B."/>
            <person name="Perea J."/>
            <person name="Pierard A."/>
            <person name="Piravandi E."/>
            <person name="Pohl F.M."/>
            <person name="Pohl T.M."/>
            <person name="Potier S."/>
            <person name="Proft M."/>
            <person name="Purnelle B."/>
            <person name="Ramezani Rad M."/>
            <person name="Rieger M."/>
            <person name="Rose M."/>
            <person name="Schaaff-Gerstenschlaeger I."/>
            <person name="Scherens B."/>
            <person name="Schwarzlose C."/>
            <person name="Skala J."/>
            <person name="Slonimski P.P."/>
            <person name="Smits P.H.M."/>
            <person name="Souciet J.-L."/>
            <person name="Steensma H.Y."/>
            <person name="Stucka R."/>
            <person name="Urrestarazu L.A."/>
            <person name="van der Aart Q.J.M."/>
            <person name="Van Dyck L."/>
            <person name="Vassarotti A."/>
            <person name="Vetter I."/>
            <person name="Vierendeels F."/>
            <person name="Vissers S."/>
            <person name="Wagner G."/>
            <person name="de Wergifosse P."/>
            <person name="Wolfe K.H."/>
            <person name="Zagulski M."/>
            <person name="Zimmermann F.K."/>
            <person name="Mewes H.-W."/>
            <person name="Kleine K."/>
        </authorList>
    </citation>
    <scope>NUCLEOTIDE SEQUENCE [LARGE SCALE GENOMIC DNA]</scope>
    <source>
        <strain>ATCC 204508 / S288c</strain>
    </source>
</reference>
<reference key="3">
    <citation type="journal article" date="2014" name="G3 (Bethesda)">
        <title>The reference genome sequence of Saccharomyces cerevisiae: Then and now.</title>
        <authorList>
            <person name="Engel S.R."/>
            <person name="Dietrich F.S."/>
            <person name="Fisk D.G."/>
            <person name="Binkley G."/>
            <person name="Balakrishnan R."/>
            <person name="Costanzo M.C."/>
            <person name="Dwight S.S."/>
            <person name="Hitz B.C."/>
            <person name="Karra K."/>
            <person name="Nash R.S."/>
            <person name="Weng S."/>
            <person name="Wong E.D."/>
            <person name="Lloyd P."/>
            <person name="Skrzypek M.S."/>
            <person name="Miyasato S.R."/>
            <person name="Simison M."/>
            <person name="Cherry J.M."/>
        </authorList>
    </citation>
    <scope>GENOME REANNOTATION</scope>
    <source>
        <strain>ATCC 204508 / S288c</strain>
    </source>
</reference>
<reference key="4">
    <citation type="journal article" date="2007" name="Genome Res.">
        <title>Approaching a complete repository of sequence-verified protein-encoding clones for Saccharomyces cerevisiae.</title>
        <authorList>
            <person name="Hu Y."/>
            <person name="Rolfs A."/>
            <person name="Bhullar B."/>
            <person name="Murthy T.V.S."/>
            <person name="Zhu C."/>
            <person name="Berger M.F."/>
            <person name="Camargo A.A."/>
            <person name="Kelley F."/>
            <person name="McCarron S."/>
            <person name="Jepson D."/>
            <person name="Richardson A."/>
            <person name="Raphael J."/>
            <person name="Moreira D."/>
            <person name="Taycher E."/>
            <person name="Zuo D."/>
            <person name="Mohr S."/>
            <person name="Kane M.F."/>
            <person name="Williamson J."/>
            <person name="Simpson A.J.G."/>
            <person name="Bulyk M.L."/>
            <person name="Harlow E."/>
            <person name="Marsischky G."/>
            <person name="Kolodner R.D."/>
            <person name="LaBaer J."/>
        </authorList>
    </citation>
    <scope>NUCLEOTIDE SEQUENCE [GENOMIC DNA]</scope>
    <source>
        <strain>ATCC 204508 / S288c</strain>
    </source>
</reference>
<reference key="5">
    <citation type="journal article" date="2003" name="Nature">
        <title>Global analysis of protein expression in yeast.</title>
        <authorList>
            <person name="Ghaemmaghami S."/>
            <person name="Huh W.-K."/>
            <person name="Bower K."/>
            <person name="Howson R.W."/>
            <person name="Belle A."/>
            <person name="Dephoure N."/>
            <person name="O'Shea E.K."/>
            <person name="Weissman J.S."/>
        </authorList>
    </citation>
    <scope>LEVEL OF PROTEIN EXPRESSION [LARGE SCALE ANALYSIS]</scope>
</reference>
<reference key="6">
    <citation type="journal article" date="2007" name="J. Proteome Res.">
        <title>Large-scale phosphorylation analysis of alpha-factor-arrested Saccharomyces cerevisiae.</title>
        <authorList>
            <person name="Li X."/>
            <person name="Gerber S.A."/>
            <person name="Rudner A.D."/>
            <person name="Beausoleil S.A."/>
            <person name="Haas W."/>
            <person name="Villen J."/>
            <person name="Elias J.E."/>
            <person name="Gygi S.P."/>
        </authorList>
    </citation>
    <scope>IDENTIFICATION BY MASS SPECTROMETRY [LARGE SCALE ANALYSIS]</scope>
    <source>
        <strain>ADR376</strain>
    </source>
</reference>
<reference key="7">
    <citation type="journal article" date="2008" name="Mol. Cell. Proteomics">
        <title>A multidimensional chromatography technology for in-depth phosphoproteome analysis.</title>
        <authorList>
            <person name="Albuquerque C.P."/>
            <person name="Smolka M.B."/>
            <person name="Payne S.H."/>
            <person name="Bafna V."/>
            <person name="Eng J."/>
            <person name="Zhou H."/>
        </authorList>
    </citation>
    <scope>IDENTIFICATION BY MASS SPECTROMETRY [LARGE SCALE ANALYSIS]</scope>
</reference>
<reference key="8">
    <citation type="journal article" date="2009" name="Science">
        <title>Global analysis of Cdk1 substrate phosphorylation sites provides insights into evolution.</title>
        <authorList>
            <person name="Holt L.J."/>
            <person name="Tuch B.B."/>
            <person name="Villen J."/>
            <person name="Johnson A.D."/>
            <person name="Gygi S.P."/>
            <person name="Morgan D.O."/>
        </authorList>
    </citation>
    <scope>IDENTIFICATION BY MASS SPECTROMETRY [LARGE SCALE ANALYSIS]</scope>
</reference>
<reference key="9">
    <citation type="journal article" date="2012" name="Proc. Natl. Acad. Sci. U.S.A.">
        <title>N-terminal acetylome analyses and functional insights of the N-terminal acetyltransferase NatB.</title>
        <authorList>
            <person name="Van Damme P."/>
            <person name="Lasa M."/>
            <person name="Polevoda B."/>
            <person name="Gazquez C."/>
            <person name="Elosegui-Artola A."/>
            <person name="Kim D.S."/>
            <person name="De Juan-Pardo E."/>
            <person name="Demeyer K."/>
            <person name="Hole K."/>
            <person name="Larrea E."/>
            <person name="Timmerman E."/>
            <person name="Prieto J."/>
            <person name="Arnesen T."/>
            <person name="Sherman F."/>
            <person name="Gevaert K."/>
            <person name="Aldabe R."/>
        </authorList>
    </citation>
    <scope>IDENTIFICATION BY MASS SPECTROMETRY [LARGE SCALE ANALYSIS]</scope>
</reference>
<accession>P38306</accession>
<accession>D6VQJ3</accession>
<proteinExistence type="evidence at protein level"/>